<sequence>MEELLKYIVASLVEFPEEIVIREIEGEEQNIIELRVSPKDVGKVIGKNGRIAKSLRAILTAASVKAGKNFSLEIID</sequence>
<protein>
    <recommendedName>
        <fullName evidence="1">RNA-binding protein KhpA</fullName>
    </recommendedName>
    <alternativeName>
        <fullName evidence="1">KH-domain protein A</fullName>
    </alternativeName>
</protein>
<dbReference type="EMBL" id="AE010300">
    <property type="protein sequence ID" value="AAN49589.1"/>
    <property type="molecule type" value="Genomic_DNA"/>
</dbReference>
<dbReference type="RefSeq" id="NP_712571.1">
    <property type="nucleotide sequence ID" value="NC_004342.2"/>
</dbReference>
<dbReference type="RefSeq" id="WP_000391865.1">
    <property type="nucleotide sequence ID" value="NC_004342.2"/>
</dbReference>
<dbReference type="SMR" id="Q8F3L2"/>
<dbReference type="STRING" id="189518.LA_2390"/>
<dbReference type="PaxDb" id="189518-LA_2390"/>
<dbReference type="EnsemblBacteria" id="AAN49589">
    <property type="protein sequence ID" value="AAN49589"/>
    <property type="gene ID" value="LA_2390"/>
</dbReference>
<dbReference type="KEGG" id="lil:LA_2390"/>
<dbReference type="PATRIC" id="fig|189518.3.peg.2371"/>
<dbReference type="HOGENOM" id="CLU_132074_1_0_12"/>
<dbReference type="InParanoid" id="Q8F3L2"/>
<dbReference type="OrthoDB" id="9812389at2"/>
<dbReference type="PRO" id="PR:Q8F3L2"/>
<dbReference type="Proteomes" id="UP000001408">
    <property type="component" value="Chromosome I"/>
</dbReference>
<dbReference type="GO" id="GO:0005737">
    <property type="term" value="C:cytoplasm"/>
    <property type="evidence" value="ECO:0007669"/>
    <property type="project" value="UniProtKB-SubCell"/>
</dbReference>
<dbReference type="GO" id="GO:0003723">
    <property type="term" value="F:RNA binding"/>
    <property type="evidence" value="ECO:0007669"/>
    <property type="project" value="UniProtKB-UniRule"/>
</dbReference>
<dbReference type="GO" id="GO:0071555">
    <property type="term" value="P:cell wall organization"/>
    <property type="evidence" value="ECO:0007669"/>
    <property type="project" value="UniProtKB-KW"/>
</dbReference>
<dbReference type="GO" id="GO:0009252">
    <property type="term" value="P:peptidoglycan biosynthetic process"/>
    <property type="evidence" value="ECO:0007669"/>
    <property type="project" value="UniProtKB-UniRule"/>
</dbReference>
<dbReference type="GO" id="GO:0008360">
    <property type="term" value="P:regulation of cell shape"/>
    <property type="evidence" value="ECO:0007669"/>
    <property type="project" value="UniProtKB-KW"/>
</dbReference>
<dbReference type="CDD" id="cd22533">
    <property type="entry name" value="KH-II_YlqC-like"/>
    <property type="match status" value="1"/>
</dbReference>
<dbReference type="Gene3D" id="3.30.300.20">
    <property type="match status" value="1"/>
</dbReference>
<dbReference type="HAMAP" id="MF_00088">
    <property type="entry name" value="KhpA"/>
    <property type="match status" value="1"/>
</dbReference>
<dbReference type="InterPro" id="IPR015946">
    <property type="entry name" value="KH_dom-like_a/b"/>
</dbReference>
<dbReference type="InterPro" id="IPR009019">
    <property type="entry name" value="KH_sf_prok-type"/>
</dbReference>
<dbReference type="InterPro" id="IPR020627">
    <property type="entry name" value="KhpA"/>
</dbReference>
<dbReference type="PANTHER" id="PTHR34654:SF1">
    <property type="entry name" value="RNA-BINDING PROTEIN KHPA"/>
    <property type="match status" value="1"/>
</dbReference>
<dbReference type="PANTHER" id="PTHR34654">
    <property type="entry name" value="UPF0109 PROTEIN SCO5592"/>
    <property type="match status" value="1"/>
</dbReference>
<dbReference type="Pfam" id="PF13083">
    <property type="entry name" value="KH_KhpA-B"/>
    <property type="match status" value="1"/>
</dbReference>
<dbReference type="SUPFAM" id="SSF54814">
    <property type="entry name" value="Prokaryotic type KH domain (KH-domain type II)"/>
    <property type="match status" value="1"/>
</dbReference>
<dbReference type="PROSITE" id="PS50084">
    <property type="entry name" value="KH_TYPE_1"/>
    <property type="match status" value="1"/>
</dbReference>
<evidence type="ECO:0000255" key="1">
    <source>
        <dbReference type="HAMAP-Rule" id="MF_00088"/>
    </source>
</evidence>
<comment type="function">
    <text evidence="1">A probable RNA chaperone. Forms a complex with KhpB which binds to cellular RNA and controls its expression. Plays a role in peptidoglycan (PG) homeostasis and cell length regulation.</text>
</comment>
<comment type="subunit">
    <text evidence="1">Forms a complex with KhpB.</text>
</comment>
<comment type="subcellular location">
    <subcellularLocation>
        <location evidence="1">Cytoplasm</location>
    </subcellularLocation>
</comment>
<comment type="similarity">
    <text evidence="1">Belongs to the KhpA RNA-binding protein family.</text>
</comment>
<keyword id="KW-0133">Cell shape</keyword>
<keyword id="KW-0961">Cell wall biogenesis/degradation</keyword>
<keyword id="KW-0143">Chaperone</keyword>
<keyword id="KW-0963">Cytoplasm</keyword>
<keyword id="KW-1185">Reference proteome</keyword>
<keyword id="KW-0694">RNA-binding</keyword>
<feature type="chain" id="PRO_0000163226" description="RNA-binding protein KhpA">
    <location>
        <begin position="1"/>
        <end position="76"/>
    </location>
</feature>
<feature type="domain" description="KH" evidence="1">
    <location>
        <begin position="29"/>
        <end position="76"/>
    </location>
</feature>
<reference key="1">
    <citation type="journal article" date="2003" name="Nature">
        <title>Unique physiological and pathogenic features of Leptospira interrogans revealed by whole-genome sequencing.</title>
        <authorList>
            <person name="Ren S.-X."/>
            <person name="Fu G."/>
            <person name="Jiang X.-G."/>
            <person name="Zeng R."/>
            <person name="Miao Y.-G."/>
            <person name="Xu H."/>
            <person name="Zhang Y.-X."/>
            <person name="Xiong H."/>
            <person name="Lu G."/>
            <person name="Lu L.-F."/>
            <person name="Jiang H.-Q."/>
            <person name="Jia J."/>
            <person name="Tu Y.-F."/>
            <person name="Jiang J.-X."/>
            <person name="Gu W.-Y."/>
            <person name="Zhang Y.-Q."/>
            <person name="Cai Z."/>
            <person name="Sheng H.-H."/>
            <person name="Yin H.-F."/>
            <person name="Zhang Y."/>
            <person name="Zhu G.-F."/>
            <person name="Wan M."/>
            <person name="Huang H.-L."/>
            <person name="Qian Z."/>
            <person name="Wang S.-Y."/>
            <person name="Ma W."/>
            <person name="Yao Z.-J."/>
            <person name="Shen Y."/>
            <person name="Qiang B.-Q."/>
            <person name="Xia Q.-C."/>
            <person name="Guo X.-K."/>
            <person name="Danchin A."/>
            <person name="Saint Girons I."/>
            <person name="Somerville R.L."/>
            <person name="Wen Y.-M."/>
            <person name="Shi M.-H."/>
            <person name="Chen Z."/>
            <person name="Xu J.-G."/>
            <person name="Zhao G.-P."/>
        </authorList>
    </citation>
    <scope>NUCLEOTIDE SEQUENCE [LARGE SCALE GENOMIC DNA]</scope>
    <source>
        <strain>56601</strain>
    </source>
</reference>
<organism>
    <name type="scientific">Leptospira interrogans serogroup Icterohaemorrhagiae serovar Lai (strain 56601)</name>
    <dbReference type="NCBI Taxonomy" id="189518"/>
    <lineage>
        <taxon>Bacteria</taxon>
        <taxon>Pseudomonadati</taxon>
        <taxon>Spirochaetota</taxon>
        <taxon>Spirochaetia</taxon>
        <taxon>Leptospirales</taxon>
        <taxon>Leptospiraceae</taxon>
        <taxon>Leptospira</taxon>
    </lineage>
</organism>
<accession>Q8F3L2</accession>
<proteinExistence type="inferred from homology"/>
<name>KHPA_LEPIN</name>
<gene>
    <name evidence="1" type="primary">khpA</name>
    <name type="ordered locus">LA_2390</name>
</gene>